<feature type="chain" id="PRO_0000206965" description="Exodeoxyribonuclease 7 small subunit">
    <location>
        <begin position="1"/>
        <end position="95"/>
    </location>
</feature>
<feature type="region of interest" description="Disordered" evidence="2">
    <location>
        <begin position="62"/>
        <end position="95"/>
    </location>
</feature>
<feature type="compositionally biased region" description="Basic and acidic residues" evidence="2">
    <location>
        <begin position="62"/>
        <end position="83"/>
    </location>
</feature>
<reference key="1">
    <citation type="journal article" date="2004" name="J. Bacteriol.">
        <title>Comparative genomics of two Leptospira interrogans serovars reveals novel insights into physiology and pathogenesis.</title>
        <authorList>
            <person name="Nascimento A.L.T.O."/>
            <person name="Ko A.I."/>
            <person name="Martins E.A.L."/>
            <person name="Monteiro-Vitorello C.B."/>
            <person name="Ho P.L."/>
            <person name="Haake D.A."/>
            <person name="Verjovski-Almeida S."/>
            <person name="Hartskeerl R.A."/>
            <person name="Marques M.V."/>
            <person name="Oliveira M.C."/>
            <person name="Menck C.F.M."/>
            <person name="Leite L.C.C."/>
            <person name="Carrer H."/>
            <person name="Coutinho L.L."/>
            <person name="Degrave W.M."/>
            <person name="Dellagostin O.A."/>
            <person name="El-Dorry H."/>
            <person name="Ferro E.S."/>
            <person name="Ferro M.I.T."/>
            <person name="Furlan L.R."/>
            <person name="Gamberini M."/>
            <person name="Giglioti E.A."/>
            <person name="Goes-Neto A."/>
            <person name="Goldman G.H."/>
            <person name="Goldman M.H.S."/>
            <person name="Harakava R."/>
            <person name="Jeronimo S.M.B."/>
            <person name="Junqueira-de-Azevedo I.L.M."/>
            <person name="Kimura E.T."/>
            <person name="Kuramae E.E."/>
            <person name="Lemos E.G.M."/>
            <person name="Lemos M.V.F."/>
            <person name="Marino C.L."/>
            <person name="Nunes L.R."/>
            <person name="de Oliveira R.C."/>
            <person name="Pereira G.G."/>
            <person name="Reis M.S."/>
            <person name="Schriefer A."/>
            <person name="Siqueira W.J."/>
            <person name="Sommer P."/>
            <person name="Tsai S.M."/>
            <person name="Simpson A.J.G."/>
            <person name="Ferro J.A."/>
            <person name="Camargo L.E.A."/>
            <person name="Kitajima J.P."/>
            <person name="Setubal J.C."/>
            <person name="Van Sluys M.A."/>
        </authorList>
    </citation>
    <scope>NUCLEOTIDE SEQUENCE [LARGE SCALE GENOMIC DNA]</scope>
    <source>
        <strain>Fiocruz L1-130</strain>
    </source>
</reference>
<keyword id="KW-0963">Cytoplasm</keyword>
<keyword id="KW-0269">Exonuclease</keyword>
<keyword id="KW-0378">Hydrolase</keyword>
<keyword id="KW-0540">Nuclease</keyword>
<evidence type="ECO:0000255" key="1">
    <source>
        <dbReference type="HAMAP-Rule" id="MF_00337"/>
    </source>
</evidence>
<evidence type="ECO:0000256" key="2">
    <source>
        <dbReference type="SAM" id="MobiDB-lite"/>
    </source>
</evidence>
<protein>
    <recommendedName>
        <fullName evidence="1">Exodeoxyribonuclease 7 small subunit</fullName>
        <ecNumber evidence="1">3.1.11.6</ecNumber>
    </recommendedName>
    <alternativeName>
        <fullName evidence="1">Exodeoxyribonuclease VII small subunit</fullName>
        <shortName evidence="1">Exonuclease VII small subunit</shortName>
    </alternativeName>
</protein>
<name>EX7S_LEPIC</name>
<gene>
    <name evidence="1" type="primary">xseB</name>
    <name type="ordered locus">LIC_11590</name>
</gene>
<sequence length="95" mass="10854">MVETKSKISFEDALMELEQIAEKLERQDFSLEESLKAYERGMELKKICQGILDTAEGKIEALTKDESKKTNKTGFRGESKTTETKNNTAQEEDLF</sequence>
<comment type="function">
    <text evidence="1">Bidirectionally degrades single-stranded DNA into large acid-insoluble oligonucleotides, which are then degraded further into small acid-soluble oligonucleotides.</text>
</comment>
<comment type="catalytic activity">
    <reaction evidence="1">
        <text>Exonucleolytic cleavage in either 5'- to 3'- or 3'- to 5'-direction to yield nucleoside 5'-phosphates.</text>
        <dbReference type="EC" id="3.1.11.6"/>
    </reaction>
</comment>
<comment type="subunit">
    <text evidence="1">Heterooligomer composed of large and small subunits.</text>
</comment>
<comment type="subcellular location">
    <subcellularLocation>
        <location evidence="1">Cytoplasm</location>
    </subcellularLocation>
</comment>
<comment type="similarity">
    <text evidence="1">Belongs to the XseB family.</text>
</comment>
<accession>Q72RZ8</accession>
<organism>
    <name type="scientific">Leptospira interrogans serogroup Icterohaemorrhagiae serovar copenhageni (strain Fiocruz L1-130)</name>
    <dbReference type="NCBI Taxonomy" id="267671"/>
    <lineage>
        <taxon>Bacteria</taxon>
        <taxon>Pseudomonadati</taxon>
        <taxon>Spirochaetota</taxon>
        <taxon>Spirochaetia</taxon>
        <taxon>Leptospirales</taxon>
        <taxon>Leptospiraceae</taxon>
        <taxon>Leptospira</taxon>
    </lineage>
</organism>
<proteinExistence type="inferred from homology"/>
<dbReference type="EC" id="3.1.11.6" evidence="1"/>
<dbReference type="EMBL" id="AE016823">
    <property type="protein sequence ID" value="AAS70185.1"/>
    <property type="molecule type" value="Genomic_DNA"/>
</dbReference>
<dbReference type="RefSeq" id="WP_000230450.1">
    <property type="nucleotide sequence ID" value="NC_005823.1"/>
</dbReference>
<dbReference type="SMR" id="Q72RZ8"/>
<dbReference type="KEGG" id="lic:LIC_11590"/>
<dbReference type="HOGENOM" id="CLU_145918_3_1_12"/>
<dbReference type="Proteomes" id="UP000007037">
    <property type="component" value="Chromosome I"/>
</dbReference>
<dbReference type="GO" id="GO:0005829">
    <property type="term" value="C:cytosol"/>
    <property type="evidence" value="ECO:0007669"/>
    <property type="project" value="TreeGrafter"/>
</dbReference>
<dbReference type="GO" id="GO:0009318">
    <property type="term" value="C:exodeoxyribonuclease VII complex"/>
    <property type="evidence" value="ECO:0007669"/>
    <property type="project" value="InterPro"/>
</dbReference>
<dbReference type="GO" id="GO:0008855">
    <property type="term" value="F:exodeoxyribonuclease VII activity"/>
    <property type="evidence" value="ECO:0007669"/>
    <property type="project" value="UniProtKB-UniRule"/>
</dbReference>
<dbReference type="GO" id="GO:0006308">
    <property type="term" value="P:DNA catabolic process"/>
    <property type="evidence" value="ECO:0007669"/>
    <property type="project" value="UniProtKB-UniRule"/>
</dbReference>
<dbReference type="FunFam" id="1.10.287.1040:FF:000007">
    <property type="entry name" value="Exodeoxyribonuclease 7 small subunit"/>
    <property type="match status" value="1"/>
</dbReference>
<dbReference type="Gene3D" id="1.10.287.1040">
    <property type="entry name" value="Exonuclease VII, small subunit"/>
    <property type="match status" value="1"/>
</dbReference>
<dbReference type="HAMAP" id="MF_00337">
    <property type="entry name" value="Exonuc_7_S"/>
    <property type="match status" value="1"/>
</dbReference>
<dbReference type="InterPro" id="IPR003761">
    <property type="entry name" value="Exonuc_VII_S"/>
</dbReference>
<dbReference type="InterPro" id="IPR037004">
    <property type="entry name" value="Exonuc_VII_ssu_sf"/>
</dbReference>
<dbReference type="NCBIfam" id="NF002139">
    <property type="entry name" value="PRK00977.1-3"/>
    <property type="match status" value="1"/>
</dbReference>
<dbReference type="NCBIfam" id="NF002140">
    <property type="entry name" value="PRK00977.1-4"/>
    <property type="match status" value="1"/>
</dbReference>
<dbReference type="NCBIfam" id="NF010672">
    <property type="entry name" value="PRK14069.1"/>
    <property type="match status" value="1"/>
</dbReference>
<dbReference type="NCBIfam" id="TIGR01280">
    <property type="entry name" value="xseB"/>
    <property type="match status" value="1"/>
</dbReference>
<dbReference type="PANTHER" id="PTHR34137">
    <property type="entry name" value="EXODEOXYRIBONUCLEASE 7 SMALL SUBUNIT"/>
    <property type="match status" value="1"/>
</dbReference>
<dbReference type="PANTHER" id="PTHR34137:SF1">
    <property type="entry name" value="EXODEOXYRIBONUCLEASE 7 SMALL SUBUNIT"/>
    <property type="match status" value="1"/>
</dbReference>
<dbReference type="Pfam" id="PF02609">
    <property type="entry name" value="Exonuc_VII_S"/>
    <property type="match status" value="1"/>
</dbReference>
<dbReference type="PIRSF" id="PIRSF006488">
    <property type="entry name" value="Exonuc_VII_S"/>
    <property type="match status" value="1"/>
</dbReference>
<dbReference type="SUPFAM" id="SSF116842">
    <property type="entry name" value="XseB-like"/>
    <property type="match status" value="1"/>
</dbReference>